<organism>
    <name type="scientific">Vibrio campbellii (strain ATCC BAA-1116)</name>
    <dbReference type="NCBI Taxonomy" id="2902295"/>
    <lineage>
        <taxon>Bacteria</taxon>
        <taxon>Pseudomonadati</taxon>
        <taxon>Pseudomonadota</taxon>
        <taxon>Gammaproteobacteria</taxon>
        <taxon>Vibrionales</taxon>
        <taxon>Vibrionaceae</taxon>
        <taxon>Vibrio</taxon>
    </lineage>
</organism>
<evidence type="ECO:0000255" key="1">
    <source>
        <dbReference type="HAMAP-Rule" id="MF_00183"/>
    </source>
</evidence>
<keyword id="KW-0414">Isoprene biosynthesis</keyword>
<keyword id="KW-0464">Manganese</keyword>
<keyword id="KW-0479">Metal-binding</keyword>
<keyword id="KW-0521">NADP</keyword>
<keyword id="KW-0560">Oxidoreductase</keyword>
<accession>A7MXZ4</accession>
<comment type="function">
    <text evidence="1">Catalyzes the NADPH-dependent rearrangement and reduction of 1-deoxy-D-xylulose-5-phosphate (DXP) to 2-C-methyl-D-erythritol 4-phosphate (MEP).</text>
</comment>
<comment type="catalytic activity">
    <reaction evidence="1">
        <text>2-C-methyl-D-erythritol 4-phosphate + NADP(+) = 1-deoxy-D-xylulose 5-phosphate + NADPH + H(+)</text>
        <dbReference type="Rhea" id="RHEA:13717"/>
        <dbReference type="ChEBI" id="CHEBI:15378"/>
        <dbReference type="ChEBI" id="CHEBI:57783"/>
        <dbReference type="ChEBI" id="CHEBI:57792"/>
        <dbReference type="ChEBI" id="CHEBI:58262"/>
        <dbReference type="ChEBI" id="CHEBI:58349"/>
        <dbReference type="EC" id="1.1.1.267"/>
    </reaction>
    <physiologicalReaction direction="right-to-left" evidence="1">
        <dbReference type="Rhea" id="RHEA:13719"/>
    </physiologicalReaction>
</comment>
<comment type="cofactor">
    <cofactor evidence="1">
        <name>Mg(2+)</name>
        <dbReference type="ChEBI" id="CHEBI:18420"/>
    </cofactor>
    <cofactor evidence="1">
        <name>Mn(2+)</name>
        <dbReference type="ChEBI" id="CHEBI:29035"/>
    </cofactor>
</comment>
<comment type="pathway">
    <text evidence="1">Isoprenoid biosynthesis; isopentenyl diphosphate biosynthesis via DXP pathway; isopentenyl diphosphate from 1-deoxy-D-xylulose 5-phosphate: step 1/6.</text>
</comment>
<comment type="similarity">
    <text evidence="1">Belongs to the DXR family.</text>
</comment>
<reference key="1">
    <citation type="submission" date="2007-08" db="EMBL/GenBank/DDBJ databases">
        <authorList>
            <consortium name="The Vibrio harveyi Genome Sequencing Project"/>
            <person name="Bassler B."/>
            <person name="Clifton S.W."/>
            <person name="Fulton L."/>
            <person name="Delehaunty K."/>
            <person name="Fronick C."/>
            <person name="Harrison M."/>
            <person name="Markivic C."/>
            <person name="Fulton R."/>
            <person name="Tin-Wollam A.-M."/>
            <person name="Shah N."/>
            <person name="Pepin K."/>
            <person name="Nash W."/>
            <person name="Thiruvilangam P."/>
            <person name="Bhonagiri V."/>
            <person name="Waters C."/>
            <person name="Tu K.C."/>
            <person name="Irgon J."/>
            <person name="Wilson R.K."/>
        </authorList>
    </citation>
    <scope>NUCLEOTIDE SEQUENCE [LARGE SCALE GENOMIC DNA]</scope>
    <source>
        <strain>ATCC BAA-1116 / BB120</strain>
    </source>
</reference>
<sequence>MQKLTILGATGSIGASTLKVVEQNPELFSIVALAASTNVEKMVALCRKWQPKYAVMADKAAALALQSELASVSPSTEVLGGVDALCHVSALEEVDSVMAAIVGAAGLLPTMAAVKAGKRVLLANKEALVMSGQLFIDAVEEHGAELLPVDSEHNAIFQCLPQQVQTSLGRCNLEEHGISSILLTGSGGPFRYTDIAELEKVTPAQAIAHPNWSMGPKISVDSATMMNKGLEYIEAKWLFNAAREQLKVIIHPQSVIHSMVQYRDGSVLAQMGEPDMATPIALTMSYPSRVDAGVKPLDVTQVGELTFLQPDFARYPCLKLAIDACYEGQHATTALNAANEVAVDAFLNNRLGFTDIARINESVLNKITASHKSENVNSLESLIELDRMSRTIALEFLRERS</sequence>
<name>DXR_VIBC1</name>
<proteinExistence type="inferred from homology"/>
<gene>
    <name evidence="1" type="primary">dxr</name>
    <name type="ordered locus">VIBHAR_03231</name>
</gene>
<feature type="chain" id="PRO_1000020322" description="1-deoxy-D-xylulose 5-phosphate reductoisomerase">
    <location>
        <begin position="1"/>
        <end position="401"/>
    </location>
</feature>
<feature type="binding site" evidence="1">
    <location>
        <position position="10"/>
    </location>
    <ligand>
        <name>NADPH</name>
        <dbReference type="ChEBI" id="CHEBI:57783"/>
    </ligand>
</feature>
<feature type="binding site" evidence="1">
    <location>
        <position position="11"/>
    </location>
    <ligand>
        <name>NADPH</name>
        <dbReference type="ChEBI" id="CHEBI:57783"/>
    </ligand>
</feature>
<feature type="binding site" evidence="1">
    <location>
        <position position="12"/>
    </location>
    <ligand>
        <name>NADPH</name>
        <dbReference type="ChEBI" id="CHEBI:57783"/>
    </ligand>
</feature>
<feature type="binding site" evidence="1">
    <location>
        <position position="13"/>
    </location>
    <ligand>
        <name>NADPH</name>
        <dbReference type="ChEBI" id="CHEBI:57783"/>
    </ligand>
</feature>
<feature type="binding site" evidence="1">
    <location>
        <position position="38"/>
    </location>
    <ligand>
        <name>NADPH</name>
        <dbReference type="ChEBI" id="CHEBI:57783"/>
    </ligand>
</feature>
<feature type="binding site" evidence="1">
    <location>
        <position position="124"/>
    </location>
    <ligand>
        <name>NADPH</name>
        <dbReference type="ChEBI" id="CHEBI:57783"/>
    </ligand>
</feature>
<feature type="binding site" evidence="1">
    <location>
        <position position="125"/>
    </location>
    <ligand>
        <name>1-deoxy-D-xylulose 5-phosphate</name>
        <dbReference type="ChEBI" id="CHEBI:57792"/>
    </ligand>
</feature>
<feature type="binding site" evidence="1">
    <location>
        <position position="126"/>
    </location>
    <ligand>
        <name>NADPH</name>
        <dbReference type="ChEBI" id="CHEBI:57783"/>
    </ligand>
</feature>
<feature type="binding site" evidence="1">
    <location>
        <position position="150"/>
    </location>
    <ligand>
        <name>Mn(2+)</name>
        <dbReference type="ChEBI" id="CHEBI:29035"/>
    </ligand>
</feature>
<feature type="binding site" evidence="1">
    <location>
        <position position="151"/>
    </location>
    <ligand>
        <name>1-deoxy-D-xylulose 5-phosphate</name>
        <dbReference type="ChEBI" id="CHEBI:57792"/>
    </ligand>
</feature>
<feature type="binding site" evidence="1">
    <location>
        <position position="152"/>
    </location>
    <ligand>
        <name>1-deoxy-D-xylulose 5-phosphate</name>
        <dbReference type="ChEBI" id="CHEBI:57792"/>
    </ligand>
</feature>
<feature type="binding site" evidence="1">
    <location>
        <position position="152"/>
    </location>
    <ligand>
        <name>Mn(2+)</name>
        <dbReference type="ChEBI" id="CHEBI:29035"/>
    </ligand>
</feature>
<feature type="binding site" evidence="1">
    <location>
        <position position="186"/>
    </location>
    <ligand>
        <name>1-deoxy-D-xylulose 5-phosphate</name>
        <dbReference type="ChEBI" id="CHEBI:57792"/>
    </ligand>
</feature>
<feature type="binding site" evidence="1">
    <location>
        <position position="209"/>
    </location>
    <ligand>
        <name>1-deoxy-D-xylulose 5-phosphate</name>
        <dbReference type="ChEBI" id="CHEBI:57792"/>
    </ligand>
</feature>
<feature type="binding site" evidence="1">
    <location>
        <position position="215"/>
    </location>
    <ligand>
        <name>NADPH</name>
        <dbReference type="ChEBI" id="CHEBI:57783"/>
    </ligand>
</feature>
<feature type="binding site" evidence="1">
    <location>
        <position position="222"/>
    </location>
    <ligand>
        <name>1-deoxy-D-xylulose 5-phosphate</name>
        <dbReference type="ChEBI" id="CHEBI:57792"/>
    </ligand>
</feature>
<feature type="binding site" evidence="1">
    <location>
        <position position="227"/>
    </location>
    <ligand>
        <name>1-deoxy-D-xylulose 5-phosphate</name>
        <dbReference type="ChEBI" id="CHEBI:57792"/>
    </ligand>
</feature>
<feature type="binding site" evidence="1">
    <location>
        <position position="228"/>
    </location>
    <ligand>
        <name>1-deoxy-D-xylulose 5-phosphate</name>
        <dbReference type="ChEBI" id="CHEBI:57792"/>
    </ligand>
</feature>
<feature type="binding site" evidence="1">
    <location>
        <position position="231"/>
    </location>
    <ligand>
        <name>1-deoxy-D-xylulose 5-phosphate</name>
        <dbReference type="ChEBI" id="CHEBI:57792"/>
    </ligand>
</feature>
<feature type="binding site" evidence="1">
    <location>
        <position position="231"/>
    </location>
    <ligand>
        <name>Mn(2+)</name>
        <dbReference type="ChEBI" id="CHEBI:29035"/>
    </ligand>
</feature>
<dbReference type="EC" id="1.1.1.267" evidence="1"/>
<dbReference type="EMBL" id="CP000789">
    <property type="protein sequence ID" value="ABU72180.1"/>
    <property type="molecule type" value="Genomic_DNA"/>
</dbReference>
<dbReference type="RefSeq" id="WP_012128694.1">
    <property type="nucleotide sequence ID" value="NC_009783.1"/>
</dbReference>
<dbReference type="SMR" id="A7MXZ4"/>
<dbReference type="KEGG" id="vha:VIBHAR_03231"/>
<dbReference type="PATRIC" id="fig|338187.25.peg.2959"/>
<dbReference type="UniPathway" id="UPA00056">
    <property type="reaction ID" value="UER00092"/>
</dbReference>
<dbReference type="Proteomes" id="UP000008152">
    <property type="component" value="Chromosome I"/>
</dbReference>
<dbReference type="GO" id="GO:0030604">
    <property type="term" value="F:1-deoxy-D-xylulose-5-phosphate reductoisomerase activity"/>
    <property type="evidence" value="ECO:0007669"/>
    <property type="project" value="UniProtKB-UniRule"/>
</dbReference>
<dbReference type="GO" id="GO:0030145">
    <property type="term" value="F:manganese ion binding"/>
    <property type="evidence" value="ECO:0007669"/>
    <property type="project" value="TreeGrafter"/>
</dbReference>
<dbReference type="GO" id="GO:0070402">
    <property type="term" value="F:NADPH binding"/>
    <property type="evidence" value="ECO:0007669"/>
    <property type="project" value="InterPro"/>
</dbReference>
<dbReference type="GO" id="GO:0051484">
    <property type="term" value="P:isopentenyl diphosphate biosynthetic process, methylerythritol 4-phosphate pathway involved in terpenoid biosynthetic process"/>
    <property type="evidence" value="ECO:0007669"/>
    <property type="project" value="TreeGrafter"/>
</dbReference>
<dbReference type="FunFam" id="1.10.1740.10:FF:000004">
    <property type="entry name" value="1-deoxy-D-xylulose 5-phosphate reductoisomerase"/>
    <property type="match status" value="1"/>
</dbReference>
<dbReference type="FunFam" id="3.40.50.720:FF:000045">
    <property type="entry name" value="1-deoxy-D-xylulose 5-phosphate reductoisomerase"/>
    <property type="match status" value="1"/>
</dbReference>
<dbReference type="Gene3D" id="1.10.1740.10">
    <property type="match status" value="1"/>
</dbReference>
<dbReference type="Gene3D" id="3.40.50.720">
    <property type="entry name" value="NAD(P)-binding Rossmann-like Domain"/>
    <property type="match status" value="1"/>
</dbReference>
<dbReference type="HAMAP" id="MF_00183">
    <property type="entry name" value="DXP_reductoisom"/>
    <property type="match status" value="1"/>
</dbReference>
<dbReference type="InterPro" id="IPR003821">
    <property type="entry name" value="DXP_reductoisomerase"/>
</dbReference>
<dbReference type="InterPro" id="IPR013644">
    <property type="entry name" value="DXP_reductoisomerase_C"/>
</dbReference>
<dbReference type="InterPro" id="IPR013512">
    <property type="entry name" value="DXP_reductoisomerase_N"/>
</dbReference>
<dbReference type="InterPro" id="IPR026877">
    <property type="entry name" value="DXPR_C"/>
</dbReference>
<dbReference type="InterPro" id="IPR036169">
    <property type="entry name" value="DXPR_C_sf"/>
</dbReference>
<dbReference type="InterPro" id="IPR036291">
    <property type="entry name" value="NAD(P)-bd_dom_sf"/>
</dbReference>
<dbReference type="NCBIfam" id="TIGR00243">
    <property type="entry name" value="Dxr"/>
    <property type="match status" value="1"/>
</dbReference>
<dbReference type="NCBIfam" id="NF003938">
    <property type="entry name" value="PRK05447.1-1"/>
    <property type="match status" value="1"/>
</dbReference>
<dbReference type="NCBIfam" id="NF009114">
    <property type="entry name" value="PRK12464.1"/>
    <property type="match status" value="1"/>
</dbReference>
<dbReference type="PANTHER" id="PTHR30525">
    <property type="entry name" value="1-DEOXY-D-XYLULOSE 5-PHOSPHATE REDUCTOISOMERASE"/>
    <property type="match status" value="1"/>
</dbReference>
<dbReference type="PANTHER" id="PTHR30525:SF0">
    <property type="entry name" value="1-DEOXY-D-XYLULOSE 5-PHOSPHATE REDUCTOISOMERASE, CHLOROPLASTIC"/>
    <property type="match status" value="1"/>
</dbReference>
<dbReference type="Pfam" id="PF08436">
    <property type="entry name" value="DXP_redisom_C"/>
    <property type="match status" value="1"/>
</dbReference>
<dbReference type="Pfam" id="PF02670">
    <property type="entry name" value="DXP_reductoisom"/>
    <property type="match status" value="1"/>
</dbReference>
<dbReference type="Pfam" id="PF13288">
    <property type="entry name" value="DXPR_C"/>
    <property type="match status" value="1"/>
</dbReference>
<dbReference type="PIRSF" id="PIRSF006205">
    <property type="entry name" value="Dxp_reductismrs"/>
    <property type="match status" value="1"/>
</dbReference>
<dbReference type="SUPFAM" id="SSF69055">
    <property type="entry name" value="1-deoxy-D-xylulose-5-phosphate reductoisomerase, C-terminal domain"/>
    <property type="match status" value="1"/>
</dbReference>
<dbReference type="SUPFAM" id="SSF55347">
    <property type="entry name" value="Glyceraldehyde-3-phosphate dehydrogenase-like, C-terminal domain"/>
    <property type="match status" value="1"/>
</dbReference>
<dbReference type="SUPFAM" id="SSF51735">
    <property type="entry name" value="NAD(P)-binding Rossmann-fold domains"/>
    <property type="match status" value="1"/>
</dbReference>
<protein>
    <recommendedName>
        <fullName evidence="1">1-deoxy-D-xylulose 5-phosphate reductoisomerase</fullName>
        <shortName evidence="1">DXP reductoisomerase</shortName>
        <ecNumber evidence="1">1.1.1.267</ecNumber>
    </recommendedName>
    <alternativeName>
        <fullName evidence="1">1-deoxyxylulose-5-phosphate reductoisomerase</fullName>
    </alternativeName>
    <alternativeName>
        <fullName evidence="1">2-C-methyl-D-erythritol 4-phosphate synthase</fullName>
    </alternativeName>
</protein>